<gene>
    <name evidence="1" type="primary">rpsZ</name>
    <name evidence="1" type="synonym">rpsN</name>
    <name type="ordered locus">MMOB2480</name>
</gene>
<feature type="chain" id="PRO_0000269121" description="Small ribosomal subunit protein uS14">
    <location>
        <begin position="1"/>
        <end position="61"/>
    </location>
</feature>
<feature type="binding site" evidence="1">
    <location>
        <position position="24"/>
    </location>
    <ligand>
        <name>Zn(2+)</name>
        <dbReference type="ChEBI" id="CHEBI:29105"/>
    </ligand>
</feature>
<feature type="binding site" evidence="1">
    <location>
        <position position="27"/>
    </location>
    <ligand>
        <name>Zn(2+)</name>
        <dbReference type="ChEBI" id="CHEBI:29105"/>
    </ligand>
</feature>
<feature type="binding site" evidence="1">
    <location>
        <position position="40"/>
    </location>
    <ligand>
        <name>Zn(2+)</name>
        <dbReference type="ChEBI" id="CHEBI:29105"/>
    </ligand>
</feature>
<feature type="binding site" evidence="1">
    <location>
        <position position="43"/>
    </location>
    <ligand>
        <name>Zn(2+)</name>
        <dbReference type="ChEBI" id="CHEBI:29105"/>
    </ligand>
</feature>
<keyword id="KW-0479">Metal-binding</keyword>
<keyword id="KW-1185">Reference proteome</keyword>
<keyword id="KW-0687">Ribonucleoprotein</keyword>
<keyword id="KW-0689">Ribosomal protein</keyword>
<keyword id="KW-0694">RNA-binding</keyword>
<keyword id="KW-0699">rRNA-binding</keyword>
<keyword id="KW-0862">Zinc</keyword>
<reference key="1">
    <citation type="journal article" date="2004" name="Genome Res.">
        <title>The complete genome and proteome of Mycoplasma mobile.</title>
        <authorList>
            <person name="Jaffe J.D."/>
            <person name="Stange-Thomann N."/>
            <person name="Smith C."/>
            <person name="DeCaprio D."/>
            <person name="Fisher S."/>
            <person name="Butler J."/>
            <person name="Calvo S."/>
            <person name="Elkins T."/>
            <person name="FitzGerald M.G."/>
            <person name="Hafez N."/>
            <person name="Kodira C.D."/>
            <person name="Major J."/>
            <person name="Wang S."/>
            <person name="Wilkinson J."/>
            <person name="Nicol R."/>
            <person name="Nusbaum C."/>
            <person name="Birren B."/>
            <person name="Berg H.C."/>
            <person name="Church G.M."/>
        </authorList>
    </citation>
    <scope>NUCLEOTIDE SEQUENCE [LARGE SCALE GENOMIC DNA]</scope>
    <source>
        <strain>ATCC 43663 / NCTC 11711 / 163 K</strain>
    </source>
</reference>
<protein>
    <recommendedName>
        <fullName evidence="1">Small ribosomal subunit protein uS14</fullName>
    </recommendedName>
    <alternativeName>
        <fullName evidence="2">30S ribosomal protein S14 type Z</fullName>
    </alternativeName>
</protein>
<sequence>MAKTSLKVKATRHPKYSARAYTRCQICGRPQAVLRKYKICRICFRKLAHEGKIPGMKKASW</sequence>
<dbReference type="EMBL" id="AE017308">
    <property type="protein sequence ID" value="AAT27734.1"/>
    <property type="molecule type" value="Genomic_DNA"/>
</dbReference>
<dbReference type="RefSeq" id="WP_011264768.1">
    <property type="nucleotide sequence ID" value="NC_006908.1"/>
</dbReference>
<dbReference type="SMR" id="Q6KI42"/>
<dbReference type="STRING" id="267748.MMOB2480"/>
<dbReference type="KEGG" id="mmo:MMOB2480"/>
<dbReference type="eggNOG" id="COG0199">
    <property type="taxonomic scope" value="Bacteria"/>
</dbReference>
<dbReference type="HOGENOM" id="CLU_139869_3_0_14"/>
<dbReference type="OrthoDB" id="9810484at2"/>
<dbReference type="Proteomes" id="UP000009072">
    <property type="component" value="Chromosome"/>
</dbReference>
<dbReference type="GO" id="GO:0005737">
    <property type="term" value="C:cytoplasm"/>
    <property type="evidence" value="ECO:0007669"/>
    <property type="project" value="UniProtKB-ARBA"/>
</dbReference>
<dbReference type="GO" id="GO:0015935">
    <property type="term" value="C:small ribosomal subunit"/>
    <property type="evidence" value="ECO:0007669"/>
    <property type="project" value="TreeGrafter"/>
</dbReference>
<dbReference type="GO" id="GO:0019843">
    <property type="term" value="F:rRNA binding"/>
    <property type="evidence" value="ECO:0007669"/>
    <property type="project" value="UniProtKB-UniRule"/>
</dbReference>
<dbReference type="GO" id="GO:0003735">
    <property type="term" value="F:structural constituent of ribosome"/>
    <property type="evidence" value="ECO:0007669"/>
    <property type="project" value="InterPro"/>
</dbReference>
<dbReference type="GO" id="GO:0008270">
    <property type="term" value="F:zinc ion binding"/>
    <property type="evidence" value="ECO:0007669"/>
    <property type="project" value="UniProtKB-UniRule"/>
</dbReference>
<dbReference type="GO" id="GO:0006412">
    <property type="term" value="P:translation"/>
    <property type="evidence" value="ECO:0007669"/>
    <property type="project" value="UniProtKB-UniRule"/>
</dbReference>
<dbReference type="FunFam" id="4.10.830.10:FF:000001">
    <property type="entry name" value="30S ribosomal protein S14 type Z"/>
    <property type="match status" value="1"/>
</dbReference>
<dbReference type="Gene3D" id="4.10.830.10">
    <property type="entry name" value="30s Ribosomal Protein S14, Chain N"/>
    <property type="match status" value="1"/>
</dbReference>
<dbReference type="HAMAP" id="MF_01364_B">
    <property type="entry name" value="Ribosomal_uS14_2_B"/>
    <property type="match status" value="1"/>
</dbReference>
<dbReference type="InterPro" id="IPR001209">
    <property type="entry name" value="Ribosomal_uS14"/>
</dbReference>
<dbReference type="InterPro" id="IPR023053">
    <property type="entry name" value="Ribosomal_uS14_bact"/>
</dbReference>
<dbReference type="InterPro" id="IPR043140">
    <property type="entry name" value="Ribosomal_uS14_sf"/>
</dbReference>
<dbReference type="NCBIfam" id="NF005974">
    <property type="entry name" value="PRK08061.1"/>
    <property type="match status" value="1"/>
</dbReference>
<dbReference type="PANTHER" id="PTHR19836">
    <property type="entry name" value="30S RIBOSOMAL PROTEIN S14"/>
    <property type="match status" value="1"/>
</dbReference>
<dbReference type="PANTHER" id="PTHR19836:SF19">
    <property type="entry name" value="SMALL RIBOSOMAL SUBUNIT PROTEIN US14M"/>
    <property type="match status" value="1"/>
</dbReference>
<dbReference type="Pfam" id="PF00253">
    <property type="entry name" value="Ribosomal_S14"/>
    <property type="match status" value="1"/>
</dbReference>
<dbReference type="SUPFAM" id="SSF57716">
    <property type="entry name" value="Glucocorticoid receptor-like (DNA-binding domain)"/>
    <property type="match status" value="1"/>
</dbReference>
<name>RS14Z_MYCM1</name>
<accession>Q6KI42</accession>
<comment type="function">
    <text evidence="1">Binds 16S rRNA, required for the assembly of 30S particles and may also be responsible for determining the conformation of the 16S rRNA at the A site.</text>
</comment>
<comment type="cofactor">
    <cofactor evidence="1">
        <name>Zn(2+)</name>
        <dbReference type="ChEBI" id="CHEBI:29105"/>
    </cofactor>
    <text evidence="1">Binds 1 zinc ion per subunit.</text>
</comment>
<comment type="subunit">
    <text evidence="1">Part of the 30S ribosomal subunit. Contacts proteins S3 and S10.</text>
</comment>
<comment type="similarity">
    <text evidence="1">Belongs to the universal ribosomal protein uS14 family. Zinc-binding uS14 subfamily.</text>
</comment>
<proteinExistence type="inferred from homology"/>
<organism>
    <name type="scientific">Mycoplasma mobile (strain ATCC 43663 / 163K / NCTC 11711)</name>
    <name type="common">Mesomycoplasma mobile</name>
    <dbReference type="NCBI Taxonomy" id="267748"/>
    <lineage>
        <taxon>Bacteria</taxon>
        <taxon>Bacillati</taxon>
        <taxon>Mycoplasmatota</taxon>
        <taxon>Mycoplasmoidales</taxon>
        <taxon>Metamycoplasmataceae</taxon>
        <taxon>Mesomycoplasma</taxon>
    </lineage>
</organism>
<evidence type="ECO:0000255" key="1">
    <source>
        <dbReference type="HAMAP-Rule" id="MF_01364"/>
    </source>
</evidence>
<evidence type="ECO:0000305" key="2"/>